<sequence length="205" mass="22384">MIGRLRGTLAEKQPPHLIIDVNGVGYELEVPMTTLYRLPKVGETVTVHTHLVVREDAHLLYGFAEKRERELFRELIRLNGVGPKLALALMSGLEVDELVRCVQAQDTSALVRVPGVGKKTAERLLVELKDRFKAWETSPAMFTLVSDGPLPVASESSAEADAVSALVSLGYKPQEASKAIAAIKDKAGLSSEELIRRSLKGMISK</sequence>
<organism>
    <name type="scientific">Pseudomonas putida (strain ATCC 47054 / DSM 6125 / CFBP 8728 / NCIMB 11950 / KT2440)</name>
    <dbReference type="NCBI Taxonomy" id="160488"/>
    <lineage>
        <taxon>Bacteria</taxon>
        <taxon>Pseudomonadati</taxon>
        <taxon>Pseudomonadota</taxon>
        <taxon>Gammaproteobacteria</taxon>
        <taxon>Pseudomonadales</taxon>
        <taxon>Pseudomonadaceae</taxon>
        <taxon>Pseudomonas</taxon>
    </lineage>
</organism>
<proteinExistence type="inferred from homology"/>
<keyword id="KW-0963">Cytoplasm</keyword>
<keyword id="KW-0227">DNA damage</keyword>
<keyword id="KW-0233">DNA recombination</keyword>
<keyword id="KW-0234">DNA repair</keyword>
<keyword id="KW-0238">DNA-binding</keyword>
<keyword id="KW-1185">Reference proteome</keyword>
<protein>
    <recommendedName>
        <fullName evidence="1">Holliday junction branch migration complex subunit RuvA</fullName>
    </recommendedName>
</protein>
<evidence type="ECO:0000255" key="1">
    <source>
        <dbReference type="HAMAP-Rule" id="MF_00031"/>
    </source>
</evidence>
<feature type="chain" id="PRO_0000094666" description="Holliday junction branch migration complex subunit RuvA">
    <location>
        <begin position="1"/>
        <end position="205"/>
    </location>
</feature>
<feature type="region of interest" description="Domain I" evidence="1">
    <location>
        <begin position="1"/>
        <end position="64"/>
    </location>
</feature>
<feature type="region of interest" description="Domain II" evidence="1">
    <location>
        <begin position="65"/>
        <end position="143"/>
    </location>
</feature>
<feature type="region of interest" description="Flexible linker" evidence="1">
    <location>
        <begin position="144"/>
        <end position="154"/>
    </location>
</feature>
<feature type="region of interest" description="Domain III" evidence="1">
    <location>
        <begin position="154"/>
        <end position="205"/>
    </location>
</feature>
<accession>Q88NJ1</accession>
<dbReference type="EMBL" id="AE015451">
    <property type="protein sequence ID" value="AAN66840.1"/>
    <property type="molecule type" value="Genomic_DNA"/>
</dbReference>
<dbReference type="RefSeq" id="NP_743376.1">
    <property type="nucleotide sequence ID" value="NC_002947.4"/>
</dbReference>
<dbReference type="RefSeq" id="WP_003254768.1">
    <property type="nucleotide sequence ID" value="NZ_CP169744.1"/>
</dbReference>
<dbReference type="SMR" id="Q88NJ1"/>
<dbReference type="STRING" id="160488.PP_1216"/>
<dbReference type="PaxDb" id="160488-PP_1216"/>
<dbReference type="GeneID" id="83678582"/>
<dbReference type="KEGG" id="ppu:PP_1216"/>
<dbReference type="PATRIC" id="fig|160488.4.peg.1292"/>
<dbReference type="eggNOG" id="COG0632">
    <property type="taxonomic scope" value="Bacteria"/>
</dbReference>
<dbReference type="HOGENOM" id="CLU_087936_0_0_6"/>
<dbReference type="OrthoDB" id="5293449at2"/>
<dbReference type="PhylomeDB" id="Q88NJ1"/>
<dbReference type="BioCyc" id="PPUT160488:G1G01-1301-MONOMER"/>
<dbReference type="Proteomes" id="UP000000556">
    <property type="component" value="Chromosome"/>
</dbReference>
<dbReference type="GO" id="GO:0005737">
    <property type="term" value="C:cytoplasm"/>
    <property type="evidence" value="ECO:0007669"/>
    <property type="project" value="UniProtKB-SubCell"/>
</dbReference>
<dbReference type="GO" id="GO:0009379">
    <property type="term" value="C:Holliday junction helicase complex"/>
    <property type="evidence" value="ECO:0007669"/>
    <property type="project" value="InterPro"/>
</dbReference>
<dbReference type="GO" id="GO:0048476">
    <property type="term" value="C:Holliday junction resolvase complex"/>
    <property type="evidence" value="ECO:0007669"/>
    <property type="project" value="UniProtKB-UniRule"/>
</dbReference>
<dbReference type="GO" id="GO:0005524">
    <property type="term" value="F:ATP binding"/>
    <property type="evidence" value="ECO:0007669"/>
    <property type="project" value="InterPro"/>
</dbReference>
<dbReference type="GO" id="GO:0000400">
    <property type="term" value="F:four-way junction DNA binding"/>
    <property type="evidence" value="ECO:0007669"/>
    <property type="project" value="UniProtKB-UniRule"/>
</dbReference>
<dbReference type="GO" id="GO:0009378">
    <property type="term" value="F:four-way junction helicase activity"/>
    <property type="evidence" value="ECO:0007669"/>
    <property type="project" value="InterPro"/>
</dbReference>
<dbReference type="GO" id="GO:0006310">
    <property type="term" value="P:DNA recombination"/>
    <property type="evidence" value="ECO:0007669"/>
    <property type="project" value="UniProtKB-UniRule"/>
</dbReference>
<dbReference type="GO" id="GO:0006281">
    <property type="term" value="P:DNA repair"/>
    <property type="evidence" value="ECO:0007669"/>
    <property type="project" value="UniProtKB-UniRule"/>
</dbReference>
<dbReference type="CDD" id="cd14332">
    <property type="entry name" value="UBA_RuvA_C"/>
    <property type="match status" value="1"/>
</dbReference>
<dbReference type="Gene3D" id="1.10.150.20">
    <property type="entry name" value="5' to 3' exonuclease, C-terminal subdomain"/>
    <property type="match status" value="1"/>
</dbReference>
<dbReference type="Gene3D" id="1.10.8.10">
    <property type="entry name" value="DNA helicase RuvA subunit, C-terminal domain"/>
    <property type="match status" value="1"/>
</dbReference>
<dbReference type="Gene3D" id="2.40.50.140">
    <property type="entry name" value="Nucleic acid-binding proteins"/>
    <property type="match status" value="1"/>
</dbReference>
<dbReference type="HAMAP" id="MF_00031">
    <property type="entry name" value="DNA_HJ_migration_RuvA"/>
    <property type="match status" value="1"/>
</dbReference>
<dbReference type="InterPro" id="IPR013849">
    <property type="entry name" value="DNA_helicase_Holl-junc_RuvA_I"/>
</dbReference>
<dbReference type="InterPro" id="IPR003583">
    <property type="entry name" value="Hlx-hairpin-Hlx_DNA-bd_motif"/>
</dbReference>
<dbReference type="InterPro" id="IPR012340">
    <property type="entry name" value="NA-bd_OB-fold"/>
</dbReference>
<dbReference type="InterPro" id="IPR000085">
    <property type="entry name" value="RuvA"/>
</dbReference>
<dbReference type="InterPro" id="IPR010994">
    <property type="entry name" value="RuvA_2-like"/>
</dbReference>
<dbReference type="InterPro" id="IPR011114">
    <property type="entry name" value="RuvA_C"/>
</dbReference>
<dbReference type="InterPro" id="IPR036267">
    <property type="entry name" value="RuvA_C_sf"/>
</dbReference>
<dbReference type="NCBIfam" id="TIGR00084">
    <property type="entry name" value="ruvA"/>
    <property type="match status" value="1"/>
</dbReference>
<dbReference type="Pfam" id="PF14520">
    <property type="entry name" value="HHH_5"/>
    <property type="match status" value="1"/>
</dbReference>
<dbReference type="Pfam" id="PF07499">
    <property type="entry name" value="RuvA_C"/>
    <property type="match status" value="1"/>
</dbReference>
<dbReference type="Pfam" id="PF01330">
    <property type="entry name" value="RuvA_N"/>
    <property type="match status" value="1"/>
</dbReference>
<dbReference type="SMART" id="SM00278">
    <property type="entry name" value="HhH1"/>
    <property type="match status" value="2"/>
</dbReference>
<dbReference type="SUPFAM" id="SSF46929">
    <property type="entry name" value="DNA helicase RuvA subunit, C-terminal domain"/>
    <property type="match status" value="1"/>
</dbReference>
<dbReference type="SUPFAM" id="SSF50249">
    <property type="entry name" value="Nucleic acid-binding proteins"/>
    <property type="match status" value="1"/>
</dbReference>
<dbReference type="SUPFAM" id="SSF47781">
    <property type="entry name" value="RuvA domain 2-like"/>
    <property type="match status" value="1"/>
</dbReference>
<comment type="function">
    <text evidence="1">The RuvA-RuvB-RuvC complex processes Holliday junction (HJ) DNA during genetic recombination and DNA repair, while the RuvA-RuvB complex plays an important role in the rescue of blocked DNA replication forks via replication fork reversal (RFR). RuvA specifically binds to HJ cruciform DNA, conferring on it an open structure. The RuvB hexamer acts as an ATP-dependent pump, pulling dsDNA into and through the RuvAB complex. HJ branch migration allows RuvC to scan DNA until it finds its consensus sequence, where it cleaves and resolves the cruciform DNA.</text>
</comment>
<comment type="subunit">
    <text evidence="1">Homotetramer. Forms an RuvA(8)-RuvB(12)-Holliday junction (HJ) complex. HJ DNA is sandwiched between 2 RuvA tetramers; dsDNA enters through RuvA and exits via RuvB. An RuvB hexamer assembles on each DNA strand where it exits the tetramer. Each RuvB hexamer is contacted by two RuvA subunits (via domain III) on 2 adjacent RuvB subunits; this complex drives branch migration. In the full resolvosome a probable DNA-RuvA(4)-RuvB(12)-RuvC(2) complex forms which resolves the HJ.</text>
</comment>
<comment type="subcellular location">
    <subcellularLocation>
        <location evidence="1">Cytoplasm</location>
    </subcellularLocation>
</comment>
<comment type="domain">
    <text evidence="1">Has three domains with a flexible linker between the domains II and III and assumes an 'L' shape. Domain III is highly mobile and contacts RuvB.</text>
</comment>
<comment type="similarity">
    <text evidence="1">Belongs to the RuvA family.</text>
</comment>
<name>RUVA_PSEPK</name>
<reference key="1">
    <citation type="journal article" date="2002" name="Environ. Microbiol.">
        <title>Complete genome sequence and comparative analysis of the metabolically versatile Pseudomonas putida KT2440.</title>
        <authorList>
            <person name="Nelson K.E."/>
            <person name="Weinel C."/>
            <person name="Paulsen I.T."/>
            <person name="Dodson R.J."/>
            <person name="Hilbert H."/>
            <person name="Martins dos Santos V.A.P."/>
            <person name="Fouts D.E."/>
            <person name="Gill S.R."/>
            <person name="Pop M."/>
            <person name="Holmes M."/>
            <person name="Brinkac L.M."/>
            <person name="Beanan M.J."/>
            <person name="DeBoy R.T."/>
            <person name="Daugherty S.C."/>
            <person name="Kolonay J.F."/>
            <person name="Madupu R."/>
            <person name="Nelson W.C."/>
            <person name="White O."/>
            <person name="Peterson J.D."/>
            <person name="Khouri H.M."/>
            <person name="Hance I."/>
            <person name="Chris Lee P."/>
            <person name="Holtzapple E.K."/>
            <person name="Scanlan D."/>
            <person name="Tran K."/>
            <person name="Moazzez A."/>
            <person name="Utterback T.R."/>
            <person name="Rizzo M."/>
            <person name="Lee K."/>
            <person name="Kosack D."/>
            <person name="Moestl D."/>
            <person name="Wedler H."/>
            <person name="Lauber J."/>
            <person name="Stjepandic D."/>
            <person name="Hoheisel J."/>
            <person name="Straetz M."/>
            <person name="Heim S."/>
            <person name="Kiewitz C."/>
            <person name="Eisen J.A."/>
            <person name="Timmis K.N."/>
            <person name="Duesterhoeft A."/>
            <person name="Tuemmler B."/>
            <person name="Fraser C.M."/>
        </authorList>
    </citation>
    <scope>NUCLEOTIDE SEQUENCE [LARGE SCALE GENOMIC DNA]</scope>
    <source>
        <strain>ATCC 47054 / DSM 6125 / CFBP 8728 / NCIMB 11950 / KT2440</strain>
    </source>
</reference>
<gene>
    <name evidence="1" type="primary">ruvA</name>
    <name type="ordered locus">PP_1216</name>
</gene>